<dbReference type="EMBL" id="AP009372">
    <property type="protein sequence ID" value="BAF50322.1"/>
    <property type="molecule type" value="Genomic_DNA"/>
</dbReference>
<dbReference type="RefSeq" id="YP_001123498.1">
    <property type="nucleotide sequence ID" value="NC_009271.1"/>
</dbReference>
<dbReference type="SMR" id="A4QKW7"/>
<dbReference type="GeneID" id="4962744"/>
<dbReference type="GO" id="GO:0009507">
    <property type="term" value="C:chloroplast"/>
    <property type="evidence" value="ECO:0007669"/>
    <property type="project" value="UniProtKB-SubCell"/>
</dbReference>
<dbReference type="GO" id="GO:0022625">
    <property type="term" value="C:cytosolic large ribosomal subunit"/>
    <property type="evidence" value="ECO:0007669"/>
    <property type="project" value="TreeGrafter"/>
</dbReference>
<dbReference type="GO" id="GO:0070180">
    <property type="term" value="F:large ribosomal subunit rRNA binding"/>
    <property type="evidence" value="ECO:0007669"/>
    <property type="project" value="TreeGrafter"/>
</dbReference>
<dbReference type="GO" id="GO:0003735">
    <property type="term" value="F:structural constituent of ribosome"/>
    <property type="evidence" value="ECO:0007669"/>
    <property type="project" value="InterPro"/>
</dbReference>
<dbReference type="GO" id="GO:0006412">
    <property type="term" value="P:translation"/>
    <property type="evidence" value="ECO:0007669"/>
    <property type="project" value="UniProtKB-UniRule"/>
</dbReference>
<dbReference type="CDD" id="cd00337">
    <property type="entry name" value="Ribosomal_uL14"/>
    <property type="match status" value="1"/>
</dbReference>
<dbReference type="FunFam" id="2.40.150.20:FF:000002">
    <property type="entry name" value="50S ribosomal protein L14, chloroplastic"/>
    <property type="match status" value="1"/>
</dbReference>
<dbReference type="Gene3D" id="2.40.150.20">
    <property type="entry name" value="Ribosomal protein L14"/>
    <property type="match status" value="1"/>
</dbReference>
<dbReference type="HAMAP" id="MF_01367">
    <property type="entry name" value="Ribosomal_uL14"/>
    <property type="match status" value="1"/>
</dbReference>
<dbReference type="InterPro" id="IPR000218">
    <property type="entry name" value="Ribosomal_uL14"/>
</dbReference>
<dbReference type="InterPro" id="IPR005745">
    <property type="entry name" value="Ribosomal_uL14_bac-type"/>
</dbReference>
<dbReference type="InterPro" id="IPR019972">
    <property type="entry name" value="Ribosomal_uL14_CS"/>
</dbReference>
<dbReference type="InterPro" id="IPR036853">
    <property type="entry name" value="Ribosomal_uL14_sf"/>
</dbReference>
<dbReference type="NCBIfam" id="TIGR01067">
    <property type="entry name" value="rplN_bact"/>
    <property type="match status" value="1"/>
</dbReference>
<dbReference type="PANTHER" id="PTHR11761">
    <property type="entry name" value="50S/60S RIBOSOMAL PROTEIN L14/L23"/>
    <property type="match status" value="1"/>
</dbReference>
<dbReference type="PANTHER" id="PTHR11761:SF3">
    <property type="entry name" value="LARGE RIBOSOMAL SUBUNIT PROTEIN UL14M"/>
    <property type="match status" value="1"/>
</dbReference>
<dbReference type="Pfam" id="PF00238">
    <property type="entry name" value="Ribosomal_L14"/>
    <property type="match status" value="1"/>
</dbReference>
<dbReference type="SMART" id="SM01374">
    <property type="entry name" value="Ribosomal_L14"/>
    <property type="match status" value="1"/>
</dbReference>
<dbReference type="SUPFAM" id="SSF50193">
    <property type="entry name" value="Ribosomal protein L14"/>
    <property type="match status" value="1"/>
</dbReference>
<dbReference type="PROSITE" id="PS00049">
    <property type="entry name" value="RIBOSOMAL_L14"/>
    <property type="match status" value="1"/>
</dbReference>
<geneLocation type="chloroplast"/>
<proteinExistence type="inferred from homology"/>
<protein>
    <recommendedName>
        <fullName evidence="1">Large ribosomal subunit protein uL14c</fullName>
    </recommendedName>
    <alternativeName>
        <fullName evidence="2">50S ribosomal protein L14, chloroplastic</fullName>
    </alternativeName>
</protein>
<organism>
    <name type="scientific">Crucihimalaya wallichii</name>
    <name type="common">Rock-cress</name>
    <name type="synonym">Arabidopsis campestris</name>
    <dbReference type="NCBI Taxonomy" id="78192"/>
    <lineage>
        <taxon>Eukaryota</taxon>
        <taxon>Viridiplantae</taxon>
        <taxon>Streptophyta</taxon>
        <taxon>Embryophyta</taxon>
        <taxon>Tracheophyta</taxon>
        <taxon>Spermatophyta</taxon>
        <taxon>Magnoliopsida</taxon>
        <taxon>eudicotyledons</taxon>
        <taxon>Gunneridae</taxon>
        <taxon>Pentapetalae</taxon>
        <taxon>rosids</taxon>
        <taxon>malvids</taxon>
        <taxon>Brassicales</taxon>
        <taxon>Brassicaceae</taxon>
        <taxon>Crucihimalayeae</taxon>
        <taxon>Crucihimalaya</taxon>
    </lineage>
</organism>
<name>RK14_CRUWA</name>
<reference key="1">
    <citation type="submission" date="2007-03" db="EMBL/GenBank/DDBJ databases">
        <title>Sequencing analysis of Crucihimalaya wallichii chloroplast DNA.</title>
        <authorList>
            <person name="Hosouchi T."/>
            <person name="Tsuruoka H."/>
            <person name="Kotani H."/>
        </authorList>
    </citation>
    <scope>NUCLEOTIDE SEQUENCE [LARGE SCALE GENOMIC DNA]</scope>
</reference>
<sequence>MIQPQTYLNVADNSGARELMCIRIIGASNRRYAHIGDVIVAVIKEAIPNTPLERSEVIRAVIVRTCKELKRNNGTIIRYDDNAAVVIDQEGNPKGTRVFGAIPRELRQLNFTKIVSLAPEVL</sequence>
<feature type="chain" id="PRO_0000355870" description="Large ribosomal subunit protein uL14c">
    <location>
        <begin position="1"/>
        <end position="122"/>
    </location>
</feature>
<comment type="function">
    <text evidence="1">Binds to 23S rRNA.</text>
</comment>
<comment type="subunit">
    <text evidence="1">Part of the 50S ribosomal subunit.</text>
</comment>
<comment type="subcellular location">
    <subcellularLocation>
        <location>Plastid</location>
        <location>Chloroplast</location>
    </subcellularLocation>
</comment>
<comment type="similarity">
    <text evidence="1">Belongs to the universal ribosomal protein uL14 family.</text>
</comment>
<evidence type="ECO:0000255" key="1">
    <source>
        <dbReference type="HAMAP-Rule" id="MF_01367"/>
    </source>
</evidence>
<evidence type="ECO:0000305" key="2"/>
<accession>A4QKW7</accession>
<gene>
    <name evidence="1" type="primary">rpl14</name>
</gene>
<keyword id="KW-0150">Chloroplast</keyword>
<keyword id="KW-0934">Plastid</keyword>
<keyword id="KW-0687">Ribonucleoprotein</keyword>
<keyword id="KW-0689">Ribosomal protein</keyword>
<keyword id="KW-0694">RNA-binding</keyword>
<keyword id="KW-0699">rRNA-binding</keyword>